<proteinExistence type="inferred from homology"/>
<dbReference type="EMBL" id="CR925677">
    <property type="protein sequence ID" value="CAI28165.1"/>
    <property type="molecule type" value="Genomic_DNA"/>
</dbReference>
<dbReference type="RefSeq" id="WP_011155365.1">
    <property type="nucleotide sequence ID" value="NC_006831.1"/>
</dbReference>
<dbReference type="SMR" id="Q5FG28"/>
<dbReference type="GeneID" id="33058443"/>
<dbReference type="KEGG" id="erg:ERGA_CDS_07130"/>
<dbReference type="HOGENOM" id="CLU_148710_2_1_5"/>
<dbReference type="OrthoDB" id="9812008at2"/>
<dbReference type="Proteomes" id="UP000000533">
    <property type="component" value="Chromosome"/>
</dbReference>
<dbReference type="GO" id="GO:0022627">
    <property type="term" value="C:cytosolic small ribosomal subunit"/>
    <property type="evidence" value="ECO:0007669"/>
    <property type="project" value="TreeGrafter"/>
</dbReference>
<dbReference type="GO" id="GO:0070181">
    <property type="term" value="F:small ribosomal subunit rRNA binding"/>
    <property type="evidence" value="ECO:0007669"/>
    <property type="project" value="TreeGrafter"/>
</dbReference>
<dbReference type="GO" id="GO:0003735">
    <property type="term" value="F:structural constituent of ribosome"/>
    <property type="evidence" value="ECO:0007669"/>
    <property type="project" value="InterPro"/>
</dbReference>
<dbReference type="GO" id="GO:0006412">
    <property type="term" value="P:translation"/>
    <property type="evidence" value="ECO:0007669"/>
    <property type="project" value="UniProtKB-UniRule"/>
</dbReference>
<dbReference type="Gene3D" id="4.10.640.10">
    <property type="entry name" value="Ribosomal protein S18"/>
    <property type="match status" value="1"/>
</dbReference>
<dbReference type="HAMAP" id="MF_00270">
    <property type="entry name" value="Ribosomal_bS18"/>
    <property type="match status" value="1"/>
</dbReference>
<dbReference type="InterPro" id="IPR001648">
    <property type="entry name" value="Ribosomal_bS18"/>
</dbReference>
<dbReference type="InterPro" id="IPR036870">
    <property type="entry name" value="Ribosomal_bS18_sf"/>
</dbReference>
<dbReference type="NCBIfam" id="TIGR00165">
    <property type="entry name" value="S18"/>
    <property type="match status" value="1"/>
</dbReference>
<dbReference type="PANTHER" id="PTHR13479">
    <property type="entry name" value="30S RIBOSOMAL PROTEIN S18"/>
    <property type="match status" value="1"/>
</dbReference>
<dbReference type="PANTHER" id="PTHR13479:SF40">
    <property type="entry name" value="SMALL RIBOSOMAL SUBUNIT PROTEIN BS18M"/>
    <property type="match status" value="1"/>
</dbReference>
<dbReference type="Pfam" id="PF01084">
    <property type="entry name" value="Ribosomal_S18"/>
    <property type="match status" value="1"/>
</dbReference>
<dbReference type="PRINTS" id="PR00974">
    <property type="entry name" value="RIBOSOMALS18"/>
</dbReference>
<dbReference type="SUPFAM" id="SSF46911">
    <property type="entry name" value="Ribosomal protein S18"/>
    <property type="match status" value="1"/>
</dbReference>
<comment type="function">
    <text evidence="1">Binds as a heterodimer with protein bS6 to the central domain of the 16S rRNA, where it helps stabilize the platform of the 30S subunit.</text>
</comment>
<comment type="subunit">
    <text evidence="1">Part of the 30S ribosomal subunit. Forms a tight heterodimer with protein bS6.</text>
</comment>
<comment type="similarity">
    <text evidence="1">Belongs to the bacterial ribosomal protein bS18 family.</text>
</comment>
<reference key="1">
    <citation type="journal article" date="2006" name="J. Bacteriol.">
        <title>Comparative genomic analysis of three strains of Ehrlichia ruminantium reveals an active process of genome size plasticity.</title>
        <authorList>
            <person name="Frutos R."/>
            <person name="Viari A."/>
            <person name="Ferraz C."/>
            <person name="Morgat A."/>
            <person name="Eychenie S."/>
            <person name="Kandassamy Y."/>
            <person name="Chantal I."/>
            <person name="Bensaid A."/>
            <person name="Coissac E."/>
            <person name="Vachiery N."/>
            <person name="Demaille J."/>
            <person name="Martinez D."/>
        </authorList>
    </citation>
    <scope>NUCLEOTIDE SEQUENCE [LARGE SCALE GENOMIC DNA]</scope>
    <source>
        <strain>Gardel</strain>
    </source>
</reference>
<name>RS18_EHRRG</name>
<organism>
    <name type="scientific">Ehrlichia ruminantium (strain Gardel)</name>
    <dbReference type="NCBI Taxonomy" id="302409"/>
    <lineage>
        <taxon>Bacteria</taxon>
        <taxon>Pseudomonadati</taxon>
        <taxon>Pseudomonadota</taxon>
        <taxon>Alphaproteobacteria</taxon>
        <taxon>Rickettsiales</taxon>
        <taxon>Anaplasmataceae</taxon>
        <taxon>Ehrlichia</taxon>
    </lineage>
</organism>
<evidence type="ECO:0000255" key="1">
    <source>
        <dbReference type="HAMAP-Rule" id="MF_00270"/>
    </source>
</evidence>
<evidence type="ECO:0000305" key="2"/>
<protein>
    <recommendedName>
        <fullName evidence="1">Small ribosomal subunit protein bS18</fullName>
    </recommendedName>
    <alternativeName>
        <fullName evidence="2">30S ribosomal protein S18</fullName>
    </alternativeName>
</protein>
<accession>Q5FG28</accession>
<gene>
    <name evidence="1" type="primary">rpsR</name>
    <name type="ordered locus">ERGA_CDS_07130</name>
</gene>
<keyword id="KW-0687">Ribonucleoprotein</keyword>
<keyword id="KW-0689">Ribosomal protein</keyword>
<keyword id="KW-0694">RNA-binding</keyword>
<keyword id="KW-0699">rRNA-binding</keyword>
<feature type="chain" id="PRO_0000345464" description="Small ribosomal subunit protein bS18">
    <location>
        <begin position="1"/>
        <end position="95"/>
    </location>
</feature>
<sequence>MLKKGKKTGSNSSGGTAYSPLAYLKRPYFRRSKACPLEQCANEDIDYKNKALLSKFTSEYGRILPSRITSVSSRKQRLLSTAIKRARYLALLPYC</sequence>